<organism>
    <name type="scientific">Solibacter usitatus (strain Ellin6076)</name>
    <dbReference type="NCBI Taxonomy" id="234267"/>
    <lineage>
        <taxon>Bacteria</taxon>
        <taxon>Pseudomonadati</taxon>
        <taxon>Acidobacteriota</taxon>
        <taxon>Terriglobia</taxon>
        <taxon>Bryobacterales</taxon>
        <taxon>Solibacteraceae</taxon>
        <taxon>Candidatus Solibacter</taxon>
    </lineage>
</organism>
<accession>Q01RP1</accession>
<name>RL32_SOLUE</name>
<keyword id="KW-0687">Ribonucleoprotein</keyword>
<keyword id="KW-0689">Ribosomal protein</keyword>
<dbReference type="EMBL" id="CP000473">
    <property type="protein sequence ID" value="ABJ87679.1"/>
    <property type="molecule type" value="Genomic_DNA"/>
</dbReference>
<dbReference type="SMR" id="Q01RP1"/>
<dbReference type="STRING" id="234267.Acid_6759"/>
<dbReference type="KEGG" id="sus:Acid_6759"/>
<dbReference type="eggNOG" id="COG0333">
    <property type="taxonomic scope" value="Bacteria"/>
</dbReference>
<dbReference type="HOGENOM" id="CLU_129084_1_3_0"/>
<dbReference type="InParanoid" id="Q01RP1"/>
<dbReference type="OrthoDB" id="9812874at2"/>
<dbReference type="GO" id="GO:0015934">
    <property type="term" value="C:large ribosomal subunit"/>
    <property type="evidence" value="ECO:0007669"/>
    <property type="project" value="InterPro"/>
</dbReference>
<dbReference type="GO" id="GO:0003735">
    <property type="term" value="F:structural constituent of ribosome"/>
    <property type="evidence" value="ECO:0007669"/>
    <property type="project" value="InterPro"/>
</dbReference>
<dbReference type="GO" id="GO:0006412">
    <property type="term" value="P:translation"/>
    <property type="evidence" value="ECO:0007669"/>
    <property type="project" value="UniProtKB-UniRule"/>
</dbReference>
<dbReference type="HAMAP" id="MF_00340">
    <property type="entry name" value="Ribosomal_bL32"/>
    <property type="match status" value="1"/>
</dbReference>
<dbReference type="InterPro" id="IPR002677">
    <property type="entry name" value="Ribosomal_bL32"/>
</dbReference>
<dbReference type="InterPro" id="IPR044957">
    <property type="entry name" value="Ribosomal_bL32_bact"/>
</dbReference>
<dbReference type="InterPro" id="IPR011332">
    <property type="entry name" value="Ribosomal_zn-bd"/>
</dbReference>
<dbReference type="NCBIfam" id="TIGR01031">
    <property type="entry name" value="rpmF_bact"/>
    <property type="match status" value="1"/>
</dbReference>
<dbReference type="PANTHER" id="PTHR35534">
    <property type="entry name" value="50S RIBOSOMAL PROTEIN L32"/>
    <property type="match status" value="1"/>
</dbReference>
<dbReference type="PANTHER" id="PTHR35534:SF1">
    <property type="entry name" value="LARGE RIBOSOMAL SUBUNIT PROTEIN BL32"/>
    <property type="match status" value="1"/>
</dbReference>
<dbReference type="Pfam" id="PF01783">
    <property type="entry name" value="Ribosomal_L32p"/>
    <property type="match status" value="1"/>
</dbReference>
<dbReference type="SUPFAM" id="SSF57829">
    <property type="entry name" value="Zn-binding ribosomal proteins"/>
    <property type="match status" value="1"/>
</dbReference>
<proteinExistence type="inferred from homology"/>
<evidence type="ECO:0000255" key="1">
    <source>
        <dbReference type="HAMAP-Rule" id="MF_00340"/>
    </source>
</evidence>
<evidence type="ECO:0000256" key="2">
    <source>
        <dbReference type="SAM" id="MobiDB-lite"/>
    </source>
</evidence>
<evidence type="ECO:0000305" key="3"/>
<reference key="1">
    <citation type="journal article" date="2009" name="Appl. Environ. Microbiol.">
        <title>Three genomes from the phylum Acidobacteria provide insight into the lifestyles of these microorganisms in soils.</title>
        <authorList>
            <person name="Ward N.L."/>
            <person name="Challacombe J.F."/>
            <person name="Janssen P.H."/>
            <person name="Henrissat B."/>
            <person name="Coutinho P.M."/>
            <person name="Wu M."/>
            <person name="Xie G."/>
            <person name="Haft D.H."/>
            <person name="Sait M."/>
            <person name="Badger J."/>
            <person name="Barabote R.D."/>
            <person name="Bradley B."/>
            <person name="Brettin T.S."/>
            <person name="Brinkac L.M."/>
            <person name="Bruce D."/>
            <person name="Creasy T."/>
            <person name="Daugherty S.C."/>
            <person name="Davidsen T.M."/>
            <person name="DeBoy R.T."/>
            <person name="Detter J.C."/>
            <person name="Dodson R.J."/>
            <person name="Durkin A.S."/>
            <person name="Ganapathy A."/>
            <person name="Gwinn-Giglio M."/>
            <person name="Han C.S."/>
            <person name="Khouri H."/>
            <person name="Kiss H."/>
            <person name="Kothari S.P."/>
            <person name="Madupu R."/>
            <person name="Nelson K.E."/>
            <person name="Nelson W.C."/>
            <person name="Paulsen I."/>
            <person name="Penn K."/>
            <person name="Ren Q."/>
            <person name="Rosovitz M.J."/>
            <person name="Selengut J.D."/>
            <person name="Shrivastava S."/>
            <person name="Sullivan S.A."/>
            <person name="Tapia R."/>
            <person name="Thompson L.S."/>
            <person name="Watkins K.L."/>
            <person name="Yang Q."/>
            <person name="Yu C."/>
            <person name="Zafar N."/>
            <person name="Zhou L."/>
            <person name="Kuske C.R."/>
        </authorList>
    </citation>
    <scope>NUCLEOTIDE SEQUENCE [LARGE SCALE GENOMIC DNA]</scope>
    <source>
        <strain>Ellin6076</strain>
    </source>
</reference>
<sequence>MPNPKRRHSKKRTSTRRAHDALKQPGLSECPNCHEPKVPHRVCPHCGQYKGREVVEVVAE</sequence>
<protein>
    <recommendedName>
        <fullName evidence="1">Large ribosomal subunit protein bL32</fullName>
    </recommendedName>
    <alternativeName>
        <fullName evidence="3">50S ribosomal protein L32</fullName>
    </alternativeName>
</protein>
<feature type="chain" id="PRO_0000296568" description="Large ribosomal subunit protein bL32">
    <location>
        <begin position="1"/>
        <end position="60"/>
    </location>
</feature>
<feature type="region of interest" description="Disordered" evidence="2">
    <location>
        <begin position="1"/>
        <end position="28"/>
    </location>
</feature>
<feature type="compositionally biased region" description="Basic residues" evidence="2">
    <location>
        <begin position="1"/>
        <end position="16"/>
    </location>
</feature>
<gene>
    <name evidence="1" type="primary">rpmF</name>
    <name type="ordered locus">Acid_6759</name>
</gene>
<comment type="similarity">
    <text evidence="1">Belongs to the bacterial ribosomal protein bL32 family.</text>
</comment>